<sequence>MNPTSIVLIVIATVAVCLIIMQIYYIYENYDNIKEFNSTHSTLEYSKTINVFSLDRRIYDPNDHIYDVKQKWRCVNYKNNYVSVSVFGFKSNKDKNIKMFTTINDCINYTFSKSTHSDIYNPCILDDGFQNQDCIFLKSVI</sequence>
<keyword id="KW-1015">Disulfide bond</keyword>
<keyword id="KW-1168">Fusion of virus membrane with host membrane</keyword>
<keyword id="KW-0426">Late protein</keyword>
<keyword id="KW-0472">Membrane</keyword>
<keyword id="KW-1185">Reference proteome</keyword>
<keyword id="KW-0735">Signal-anchor</keyword>
<keyword id="KW-0812">Transmembrane</keyword>
<keyword id="KW-1133">Transmembrane helix</keyword>
<keyword id="KW-0261">Viral envelope protein</keyword>
<keyword id="KW-1162">Viral penetration into host cytoplasm</keyword>
<keyword id="KW-0946">Virion</keyword>
<keyword id="KW-1160">Virus entry into host cell</keyword>
<feature type="chain" id="PRO_0000099302" description="Envelope protein A28 homolog">
    <location>
        <begin position="1"/>
        <end position="141"/>
    </location>
</feature>
<feature type="transmembrane region" description="Helical; Signal-anchor for type II membrane protein" evidence="2">
    <location>
        <begin position="1"/>
        <end position="21"/>
    </location>
</feature>
<feature type="topological domain" description="Virion surface" evidence="2">
    <location>
        <begin position="22"/>
        <end position="141"/>
    </location>
</feature>
<protein>
    <recommendedName>
        <fullName>Envelope protein A28 homolog</fullName>
    </recommendedName>
    <alternativeName>
        <fullName>Protein 118</fullName>
    </alternativeName>
</protein>
<gene>
    <name type="ordered locus">118L</name>
</gene>
<dbReference type="EMBL" id="AY386371">
    <property type="protein sequence ID" value="AAR07474.1"/>
    <property type="molecule type" value="Genomic_DNA"/>
</dbReference>
<dbReference type="RefSeq" id="NP_938373.1">
    <property type="nucleotide sequence ID" value="NC_005179.1"/>
</dbReference>
<dbReference type="SMR" id="P60672"/>
<dbReference type="KEGG" id="vg:2943712"/>
<dbReference type="Proteomes" id="UP000008596">
    <property type="component" value="Segment"/>
</dbReference>
<dbReference type="GO" id="GO:0016020">
    <property type="term" value="C:membrane"/>
    <property type="evidence" value="ECO:0007669"/>
    <property type="project" value="UniProtKB-KW"/>
</dbReference>
<dbReference type="GO" id="GO:0019031">
    <property type="term" value="C:viral envelope"/>
    <property type="evidence" value="ECO:0007669"/>
    <property type="project" value="UniProtKB-KW"/>
</dbReference>
<dbReference type="GO" id="GO:0055036">
    <property type="term" value="C:virion membrane"/>
    <property type="evidence" value="ECO:0007669"/>
    <property type="project" value="UniProtKB-SubCell"/>
</dbReference>
<dbReference type="GO" id="GO:0039663">
    <property type="term" value="P:membrane fusion involved in viral entry into host cell"/>
    <property type="evidence" value="ECO:0007669"/>
    <property type="project" value="UniProtKB-KW"/>
</dbReference>
<dbReference type="GO" id="GO:0046718">
    <property type="term" value="P:symbiont entry into host cell"/>
    <property type="evidence" value="ECO:0007669"/>
    <property type="project" value="UniProtKB-KW"/>
</dbReference>
<dbReference type="InterPro" id="IPR007664">
    <property type="entry name" value="Poxvirus_A28"/>
</dbReference>
<dbReference type="Pfam" id="PF04584">
    <property type="entry name" value="Pox_A28"/>
    <property type="match status" value="1"/>
</dbReference>
<evidence type="ECO:0000250" key="1"/>
<evidence type="ECO:0000255" key="2"/>
<evidence type="ECO:0000305" key="3"/>
<name>A28_YMTV5</name>
<organismHost>
    <name type="scientific">Erythrocebus patas</name>
    <name type="common">Red guenon</name>
    <name type="synonym">Cercopithecus patas</name>
    <dbReference type="NCBI Taxonomy" id="9538"/>
</organismHost>
<organismHost>
    <name type="scientific">Homo sapiens</name>
    <name type="common">Human</name>
    <dbReference type="NCBI Taxonomy" id="9606"/>
</organismHost>
<organismHost>
    <name type="scientific">Macaca</name>
    <name type="common">macaques</name>
    <dbReference type="NCBI Taxonomy" id="9539"/>
</organismHost>
<organismHost>
    <name type="scientific">Papio hamadryas</name>
    <name type="common">Hamadryas baboon</name>
    <dbReference type="NCBI Taxonomy" id="9557"/>
</organismHost>
<accession>P60672</accession>
<comment type="function">
    <text evidence="1">Envelope protein required for virus entry into host cell and for cell-cell fusion (syncytium formation).</text>
</comment>
<comment type="subcellular location">
    <subcellularLocation>
        <location evidence="3">Virion membrane</location>
        <topology evidence="3">Single-pass type II membrane protein</topology>
    </subcellularLocation>
    <text evidence="1">Component of the intracellular mature virion (IMV) membrane.</text>
</comment>
<comment type="PTM">
    <text evidence="1">Contains two intramolecular disulfide bonds. They are created by the viral disulfide bond formation pathway, a poxvirus-specific pathway that operates on the cytoplasmic side of the MV membranes (By similarity).</text>
</comment>
<comment type="similarity">
    <text evidence="3">Belongs to the poxviridae A28 protein family.</text>
</comment>
<proteinExistence type="inferred from homology"/>
<organism>
    <name type="scientific">Yaba monkey tumor virus (strain VR587)</name>
    <name type="common">YMTV</name>
    <dbReference type="NCBI Taxonomy" id="928314"/>
    <lineage>
        <taxon>Viruses</taxon>
        <taxon>Varidnaviria</taxon>
        <taxon>Bamfordvirae</taxon>
        <taxon>Nucleocytoviricota</taxon>
        <taxon>Pokkesviricetes</taxon>
        <taxon>Chitovirales</taxon>
        <taxon>Poxviridae</taxon>
        <taxon>Chordopoxvirinae</taxon>
        <taxon>Yatapoxvirus</taxon>
        <taxon>Yaba monkey tumor virus</taxon>
    </lineage>
</organism>
<reference key="1">
    <citation type="journal article" date="2003" name="J. Virol.">
        <title>Complete genomic sequence and comparative analysis of the tumorigenic poxvirus Yaba monkey tumor virus.</title>
        <authorList>
            <person name="Brunetti C.R."/>
            <person name="Amano H."/>
            <person name="Ueda Y."/>
            <person name="Qin J."/>
            <person name="Miyamura T."/>
            <person name="Suzuki T."/>
            <person name="Li X."/>
            <person name="Barrett J.W."/>
            <person name="McFadden G."/>
        </authorList>
    </citation>
    <scope>NUCLEOTIDE SEQUENCE [LARGE SCALE GENOMIC DNA]</scope>
</reference>